<protein>
    <recommendedName>
        <fullName>Thioredoxin domain-containing protein 3 homolog</fullName>
    </recommendedName>
    <alternativeName>
        <fullName>3'-5' exonuclease NME8</fullName>
        <ecNumber evidence="2">3.1.-.-</ecNumber>
    </alternativeName>
    <alternativeName>
        <fullName>Intermediate chain 1</fullName>
    </alternativeName>
    <alternativeName>
        <fullName>NME/NM23 family member 8</fullName>
    </alternativeName>
</protein>
<proteinExistence type="evidence at protein level"/>
<sequence>MPAKKEQIQLQKEILNQEMWDELLSLEGLTVIDVYQKWCGPCAAVLSLFKRLRNEIGDDLLRFAVAEADSIETLERYRGKCEPCFLRYGSGQLVNVVRGVNAPALLKNVERELKQEHKVLEEGVERVVIKDPLLAAFEAEEQQAAQAEELEKKRLEEEARIKEIKELGDAGEVSVRPVSQGTVDTLMHGRQDGPQTEPVPKEVTVVLIKPDAVANGHVDSIIAKIEEHGFEILTTEDKTLTEDEAREFYKQHEEEEHFEVLVTFMASGPSKILVLTRGDTGEGVVSEVRNLLGPKDIEVAKEEAPDSLRAQFGTDKKMNAMHGADSKETAAREMAFLLPNFSVPIVPGTGPPPTIEKTLALIRPSALKDHKDEMLQKIQEAGFEVCLQKMVQLTEDQAKEFYKEQEGTPHFEDLIREMTSGEVLALGLAKESAIQSWREFIGPTTIDEAKEKAPDSLRAQYSIPDTQVNVVHGSDSVDTAEKELGFFFPKQTTLAVIKPDAAGEHKEAIIEKIKEAGFNISLQRDVELNKELASKLYLEHEGKEFYENLIDHMSSGLSMVMVLSREDAVDGWRTLMGPTDPDYAREHAPESLRALLGKDVLQNAVHGSSNPEEAKTRIERLFPDVEVLPGGEVKDSVASISMEQSQVKGEGEEGGEEQTEQPAGEGEEQQAEQPAAESGEQQAEGGEPATETATEGGEQQAEQPPAEGGEKPAEEETQQTQEGETPAADEAQAEQTQEGETPAADEAQAEQTQEGEEQKPAEEEAAPATEETAAEQAPAAEETQQTQEGEEKKEETEQTQDAPAAGGGEEAVATEGGGEGDAKPEGGEEKTEEQTAS</sequence>
<accession>P90666</accession>
<reference key="1">
    <citation type="journal article" date="1996" name="Mol. Biol. Cell">
        <title>Is outer arm dynein intermediate chain 1 multifunctional?</title>
        <authorList>
            <person name="Ogawa K."/>
            <person name="Takai H."/>
            <person name="Ogiwara A."/>
            <person name="Yokota E."/>
            <person name="Shimizu T."/>
            <person name="Inaba K."/>
            <person name="Mohri H."/>
        </authorList>
    </citation>
    <scope>NUCLEOTIDE SEQUENCE [MRNA]</scope>
    <scope>PROTEIN SEQUENCE OF 390-403; 561-570 AND 576-590</scope>
    <scope>TISSUE SPECIFICITY</scope>
    <source>
        <tissue>Testis</tissue>
    </source>
</reference>
<dbReference type="EC" id="3.1.-.-" evidence="2"/>
<dbReference type="EMBL" id="D63884">
    <property type="protein sequence ID" value="BAA09934.1"/>
    <property type="molecule type" value="mRNA"/>
</dbReference>
<dbReference type="PIR" id="T02761">
    <property type="entry name" value="T02761"/>
</dbReference>
<dbReference type="SMR" id="P90666"/>
<dbReference type="GO" id="GO:0008408">
    <property type="term" value="F:3'-5' exonuclease activity"/>
    <property type="evidence" value="ECO:0000250"/>
    <property type="project" value="UniProtKB"/>
</dbReference>
<dbReference type="GO" id="GO:0004550">
    <property type="term" value="F:nucleoside diphosphate kinase activity"/>
    <property type="evidence" value="ECO:0007669"/>
    <property type="project" value="InterPro"/>
</dbReference>
<dbReference type="GO" id="GO:0030154">
    <property type="term" value="P:cell differentiation"/>
    <property type="evidence" value="ECO:0007669"/>
    <property type="project" value="UniProtKB-KW"/>
</dbReference>
<dbReference type="GO" id="GO:0006241">
    <property type="term" value="P:CTP biosynthetic process"/>
    <property type="evidence" value="ECO:0007669"/>
    <property type="project" value="InterPro"/>
</dbReference>
<dbReference type="GO" id="GO:0006183">
    <property type="term" value="P:GTP biosynthetic process"/>
    <property type="evidence" value="ECO:0007669"/>
    <property type="project" value="InterPro"/>
</dbReference>
<dbReference type="GO" id="GO:0007283">
    <property type="term" value="P:spermatogenesis"/>
    <property type="evidence" value="ECO:0007669"/>
    <property type="project" value="UniProtKB-KW"/>
</dbReference>
<dbReference type="GO" id="GO:0006228">
    <property type="term" value="P:UTP biosynthetic process"/>
    <property type="evidence" value="ECO:0007669"/>
    <property type="project" value="InterPro"/>
</dbReference>
<dbReference type="CDD" id="cd04416">
    <property type="entry name" value="NDPk_TX"/>
    <property type="match status" value="3"/>
</dbReference>
<dbReference type="CDD" id="cd02948">
    <property type="entry name" value="TRX_NDPK"/>
    <property type="match status" value="1"/>
</dbReference>
<dbReference type="Gene3D" id="3.40.30.10">
    <property type="entry name" value="Glutaredoxin"/>
    <property type="match status" value="1"/>
</dbReference>
<dbReference type="Gene3D" id="3.30.70.141">
    <property type="entry name" value="Nucleoside diphosphate kinase-like domain"/>
    <property type="match status" value="3"/>
</dbReference>
<dbReference type="InterPro" id="IPR034907">
    <property type="entry name" value="NDK-like_dom"/>
</dbReference>
<dbReference type="InterPro" id="IPR036850">
    <property type="entry name" value="NDK-like_dom_sf"/>
</dbReference>
<dbReference type="InterPro" id="IPR001564">
    <property type="entry name" value="Nucleoside_diP_kinase"/>
</dbReference>
<dbReference type="InterPro" id="IPR023005">
    <property type="entry name" value="Nucleoside_diP_kinase_AS"/>
</dbReference>
<dbReference type="InterPro" id="IPR036249">
    <property type="entry name" value="Thioredoxin-like_sf"/>
</dbReference>
<dbReference type="InterPro" id="IPR017937">
    <property type="entry name" value="Thioredoxin_CS"/>
</dbReference>
<dbReference type="InterPro" id="IPR013766">
    <property type="entry name" value="Thioredoxin_domain"/>
</dbReference>
<dbReference type="InterPro" id="IPR051766">
    <property type="entry name" value="TXND_domain-containing"/>
</dbReference>
<dbReference type="PANTHER" id="PTHR46135">
    <property type="entry name" value="NME/NM23 FAMILY MEMBER 8"/>
    <property type="match status" value="1"/>
</dbReference>
<dbReference type="PANTHER" id="PTHR46135:SF3">
    <property type="entry name" value="NME_NM23 FAMILY MEMBER 8"/>
    <property type="match status" value="1"/>
</dbReference>
<dbReference type="Pfam" id="PF00334">
    <property type="entry name" value="NDK"/>
    <property type="match status" value="3"/>
</dbReference>
<dbReference type="Pfam" id="PF00085">
    <property type="entry name" value="Thioredoxin"/>
    <property type="match status" value="1"/>
</dbReference>
<dbReference type="PRINTS" id="PR01243">
    <property type="entry name" value="NUCDPKINASE"/>
</dbReference>
<dbReference type="SMART" id="SM00562">
    <property type="entry name" value="NDK"/>
    <property type="match status" value="3"/>
</dbReference>
<dbReference type="SUPFAM" id="SSF54919">
    <property type="entry name" value="Nucleoside diphosphate kinase, NDK"/>
    <property type="match status" value="3"/>
</dbReference>
<dbReference type="SUPFAM" id="SSF52833">
    <property type="entry name" value="Thioredoxin-like"/>
    <property type="match status" value="1"/>
</dbReference>
<dbReference type="PROSITE" id="PS00469">
    <property type="entry name" value="NDPK"/>
    <property type="match status" value="1"/>
</dbReference>
<dbReference type="PROSITE" id="PS51374">
    <property type="entry name" value="NDPK_LIKE"/>
    <property type="match status" value="3"/>
</dbReference>
<dbReference type="PROSITE" id="PS00194">
    <property type="entry name" value="THIOREDOXIN_1"/>
    <property type="match status" value="1"/>
</dbReference>
<gene>
    <name type="primary">NME8</name>
    <name type="synonym">IC1</name>
</gene>
<keyword id="KW-0217">Developmental protein</keyword>
<keyword id="KW-0221">Differentiation</keyword>
<keyword id="KW-0903">Direct protein sequencing</keyword>
<keyword id="KW-1015">Disulfide bond</keyword>
<keyword id="KW-0378">Hydrolase</keyword>
<keyword id="KW-0744">Spermatogenesis</keyword>
<organism>
    <name type="scientific">Heliocidaris crassispina</name>
    <name type="common">Sea urchin</name>
    <name type="synonym">Anthocidaris crassispina</name>
    <dbReference type="NCBI Taxonomy" id="1043166"/>
    <lineage>
        <taxon>Eukaryota</taxon>
        <taxon>Metazoa</taxon>
        <taxon>Echinodermata</taxon>
        <taxon>Eleutherozoa</taxon>
        <taxon>Echinozoa</taxon>
        <taxon>Echinoidea</taxon>
        <taxon>Euechinoidea</taxon>
        <taxon>Echinacea</taxon>
        <taxon>Camarodonta</taxon>
        <taxon>Echinidea</taxon>
        <taxon>Echinometridae</taxon>
        <taxon>Heliocidaris</taxon>
    </lineage>
</organism>
<comment type="function">
    <text evidence="2">Probably required during the final stages of sperm tail maturation in the testis and/or epididymis, where extensive disulfide bonding of fibrous sheath (FS) proteins occurs. In vitro, it has neither nucleoside diphosphate kinase (NDPK) activity nor reducing activity on disulfide bonds. Exhibits a 3'-5' exonuclease activity with a preference for single-stranded DNA, suggesting roles in DNA proofreading and repair.</text>
</comment>
<comment type="subunit">
    <text evidence="2">Monomer.</text>
</comment>
<comment type="tissue specificity">
    <text evidence="4">Testis-specific. In sperm, it is a component of the arm dynein of sperm axoneme.</text>
</comment>
<comment type="domain">
    <text evidence="5">Contains 3 inactive NDK domains that does not possess all residues considered to be crucial for the NDPK activity.</text>
</comment>
<comment type="similarity">
    <text evidence="5">In the C-terminal section; belongs to the NDK family.</text>
</comment>
<name>TXND3_HELCR</name>
<evidence type="ECO:0000250" key="1"/>
<evidence type="ECO:0000250" key="2">
    <source>
        <dbReference type="UniProtKB" id="Q8N427"/>
    </source>
</evidence>
<evidence type="ECO:0000256" key="3">
    <source>
        <dbReference type="SAM" id="MobiDB-lite"/>
    </source>
</evidence>
<evidence type="ECO:0000269" key="4">
    <source>
    </source>
</evidence>
<evidence type="ECO:0000305" key="5"/>
<feature type="chain" id="PRO_0000120159" description="Thioredoxin domain-containing protein 3 homolog">
    <location>
        <begin position="1"/>
        <end position="837"/>
    </location>
</feature>
<feature type="domain" description="Thioredoxin">
    <location>
        <begin position="6"/>
        <end position="115"/>
    </location>
</feature>
<feature type="region of interest" description="NDK 1" evidence="5">
    <location>
        <begin position="201"/>
        <end position="345"/>
    </location>
</feature>
<feature type="region of interest" description="NDK 2" evidence="5">
    <location>
        <begin position="355"/>
        <end position="491"/>
    </location>
</feature>
<feature type="region of interest" description="NDK 3" evidence="5">
    <location>
        <begin position="493"/>
        <end position="629"/>
    </location>
</feature>
<feature type="region of interest" description="Disordered" evidence="3">
    <location>
        <begin position="633"/>
        <end position="837"/>
    </location>
</feature>
<feature type="compositionally biased region" description="Polar residues" evidence="3">
    <location>
        <begin position="638"/>
        <end position="647"/>
    </location>
</feature>
<feature type="compositionally biased region" description="Acidic residues" evidence="3">
    <location>
        <begin position="652"/>
        <end position="670"/>
    </location>
</feature>
<feature type="compositionally biased region" description="Low complexity" evidence="3">
    <location>
        <begin position="671"/>
        <end position="707"/>
    </location>
</feature>
<feature type="compositionally biased region" description="Low complexity" evidence="3">
    <location>
        <begin position="718"/>
        <end position="752"/>
    </location>
</feature>
<feature type="compositionally biased region" description="Low complexity" evidence="3">
    <location>
        <begin position="766"/>
        <end position="787"/>
    </location>
</feature>
<feature type="compositionally biased region" description="Gly residues" evidence="3">
    <location>
        <begin position="805"/>
        <end position="819"/>
    </location>
</feature>
<feature type="compositionally biased region" description="Basic and acidic residues" evidence="3">
    <location>
        <begin position="820"/>
        <end position="837"/>
    </location>
</feature>
<feature type="disulfide bond" description="Redox-active" evidence="1">
    <location>
        <begin position="39"/>
        <end position="42"/>
    </location>
</feature>